<name>GAT12_ARATH</name>
<sequence length="331" mass="36489">MEDEAHEFFHTSDFAVDDLLVDFSNDDDEENDVVADSTTTTTITDSSNFSAADLPSFHGDVQDGTSFSGDLCIPSDDLADELEWLSNIVDESLSPEDVHKLELISGFKSRPDPKSDTGSPENPNSSSPIFTTDVSVPAKARSKRSRAAACNWASRGLLKETFYDSPFTGETILSSQQHLSPPTSPPLLMAPLGKKQAVDGGHRRKKDVSSPESGGAEERRCLHCATDKTPQWRTGPMGPKTLCNACGVRYKSGRLVPEYRPAASPTFVLAKHSNSHRKVMELRRQKEMSRAHHEFIHHHHGTDTAMIFDVSSDGDDYLIHHNVGPDFRQLI</sequence>
<protein>
    <recommendedName>
        <fullName evidence="7">GATA transcription factor 12</fullName>
    </recommendedName>
</protein>
<evidence type="ECO:0000250" key="1">
    <source>
        <dbReference type="UniProtKB" id="Q8LAU9"/>
    </source>
</evidence>
<evidence type="ECO:0000255" key="2"/>
<evidence type="ECO:0000255" key="3">
    <source>
        <dbReference type="PROSITE-ProRule" id="PRU00094"/>
    </source>
</evidence>
<evidence type="ECO:0000255" key="4">
    <source>
        <dbReference type="PROSITE-ProRule" id="PRU00353"/>
    </source>
</evidence>
<evidence type="ECO:0000256" key="5">
    <source>
        <dbReference type="SAM" id="MobiDB-lite"/>
    </source>
</evidence>
<evidence type="ECO:0000269" key="6">
    <source>
    </source>
</evidence>
<evidence type="ECO:0000303" key="7">
    <source>
    </source>
</evidence>
<evidence type="ECO:0000305" key="8"/>
<evidence type="ECO:0000312" key="9">
    <source>
        <dbReference type="Araport" id="AT5G25830"/>
    </source>
</evidence>
<accession>P69781</accession>
<accession>C0SVQ5</accession>
<proteinExistence type="evidence at transcript level"/>
<reference key="1">
    <citation type="journal article" date="2000" name="Nature">
        <title>Sequence and analysis of chromosome 5 of the plant Arabidopsis thaliana.</title>
        <authorList>
            <person name="Tabata S."/>
            <person name="Kaneko T."/>
            <person name="Nakamura Y."/>
            <person name="Kotani H."/>
            <person name="Kato T."/>
            <person name="Asamizu E."/>
            <person name="Miyajima N."/>
            <person name="Sasamoto S."/>
            <person name="Kimura T."/>
            <person name="Hosouchi T."/>
            <person name="Kawashima K."/>
            <person name="Kohara M."/>
            <person name="Matsumoto M."/>
            <person name="Matsuno A."/>
            <person name="Muraki A."/>
            <person name="Nakayama S."/>
            <person name="Nakazaki N."/>
            <person name="Naruo K."/>
            <person name="Okumura S."/>
            <person name="Shinpo S."/>
            <person name="Takeuchi C."/>
            <person name="Wada T."/>
            <person name="Watanabe A."/>
            <person name="Yamada M."/>
            <person name="Yasuda M."/>
            <person name="Sato S."/>
            <person name="de la Bastide M."/>
            <person name="Huang E."/>
            <person name="Spiegel L."/>
            <person name="Gnoj L."/>
            <person name="O'Shaughnessy A."/>
            <person name="Preston R."/>
            <person name="Habermann K."/>
            <person name="Murray J."/>
            <person name="Johnson D."/>
            <person name="Rohlfing T."/>
            <person name="Nelson J."/>
            <person name="Stoneking T."/>
            <person name="Pepin K."/>
            <person name="Spieth J."/>
            <person name="Sekhon M."/>
            <person name="Armstrong J."/>
            <person name="Becker M."/>
            <person name="Belter E."/>
            <person name="Cordum H."/>
            <person name="Cordes M."/>
            <person name="Courtney L."/>
            <person name="Courtney W."/>
            <person name="Dante M."/>
            <person name="Du H."/>
            <person name="Edwards J."/>
            <person name="Fryman J."/>
            <person name="Haakensen B."/>
            <person name="Lamar E."/>
            <person name="Latreille P."/>
            <person name="Leonard S."/>
            <person name="Meyer R."/>
            <person name="Mulvaney E."/>
            <person name="Ozersky P."/>
            <person name="Riley A."/>
            <person name="Strowmatt C."/>
            <person name="Wagner-McPherson C."/>
            <person name="Wollam A."/>
            <person name="Yoakum M."/>
            <person name="Bell M."/>
            <person name="Dedhia N."/>
            <person name="Parnell L."/>
            <person name="Shah R."/>
            <person name="Rodriguez M."/>
            <person name="Hoon See L."/>
            <person name="Vil D."/>
            <person name="Baker J."/>
            <person name="Kirchoff K."/>
            <person name="Toth K."/>
            <person name="King L."/>
            <person name="Bahret A."/>
            <person name="Miller B."/>
            <person name="Marra M.A."/>
            <person name="Martienssen R."/>
            <person name="McCombie W.R."/>
            <person name="Wilson R.K."/>
            <person name="Murphy G."/>
            <person name="Bancroft I."/>
            <person name="Volckaert G."/>
            <person name="Wambutt R."/>
            <person name="Duesterhoeft A."/>
            <person name="Stiekema W."/>
            <person name="Pohl T."/>
            <person name="Entian K.-D."/>
            <person name="Terryn N."/>
            <person name="Hartley N."/>
            <person name="Bent E."/>
            <person name="Johnson S."/>
            <person name="Langham S.-A."/>
            <person name="McCullagh B."/>
            <person name="Robben J."/>
            <person name="Grymonprez B."/>
            <person name="Zimmermann W."/>
            <person name="Ramsperger U."/>
            <person name="Wedler H."/>
            <person name="Balke K."/>
            <person name="Wedler E."/>
            <person name="Peters S."/>
            <person name="van Staveren M."/>
            <person name="Dirkse W."/>
            <person name="Mooijman P."/>
            <person name="Klein Lankhorst R."/>
            <person name="Weitzenegger T."/>
            <person name="Bothe G."/>
            <person name="Rose M."/>
            <person name="Hauf J."/>
            <person name="Berneiser S."/>
            <person name="Hempel S."/>
            <person name="Feldpausch M."/>
            <person name="Lamberth S."/>
            <person name="Villarroel R."/>
            <person name="Gielen J."/>
            <person name="Ardiles W."/>
            <person name="Bents O."/>
            <person name="Lemcke K."/>
            <person name="Kolesov G."/>
            <person name="Mayer K.F.X."/>
            <person name="Rudd S."/>
            <person name="Schoof H."/>
            <person name="Schueller C."/>
            <person name="Zaccaria P."/>
            <person name="Mewes H.-W."/>
            <person name="Bevan M."/>
            <person name="Fransz P.F."/>
        </authorList>
    </citation>
    <scope>NUCLEOTIDE SEQUENCE [LARGE SCALE GENOMIC DNA]</scope>
    <source>
        <strain>cv. Columbia</strain>
    </source>
</reference>
<reference key="2">
    <citation type="journal article" date="2017" name="Plant J.">
        <title>Araport11: a complete reannotation of the Arabidopsis thaliana reference genome.</title>
        <authorList>
            <person name="Cheng C.Y."/>
            <person name="Krishnakumar V."/>
            <person name="Chan A.P."/>
            <person name="Thibaud-Nissen F."/>
            <person name="Schobel S."/>
            <person name="Town C.D."/>
        </authorList>
    </citation>
    <scope>GENOME REANNOTATION</scope>
    <source>
        <strain>cv. Columbia</strain>
    </source>
</reference>
<reference key="3">
    <citation type="submission" date="2009-03" db="EMBL/GenBank/DDBJ databases">
        <title>ORF cloning and analysis of Arabidopsis transcription factor genes.</title>
        <authorList>
            <person name="Fujita M."/>
            <person name="Mizukado S."/>
            <person name="Seki M."/>
            <person name="Shinozaki K."/>
            <person name="Mitsuda N."/>
            <person name="Takiguchi Y."/>
            <person name="Takagi M."/>
        </authorList>
    </citation>
    <scope>NUCLEOTIDE SEQUENCE [LARGE SCALE MRNA]</scope>
</reference>
<reference key="4">
    <citation type="journal article" date="2007" name="Plant Physiol.">
        <title>Conservation, convergence, and divergence of light-responsive, circadian-regulated, and tissue-specific expression patterns during evolution of the Arabidopsis GATA gene family.</title>
        <authorList>
            <person name="Manfield I.W."/>
            <person name="Devlin P.F."/>
            <person name="Jen C.-H."/>
            <person name="Westhead D.R."/>
            <person name="Gilmartin P.M."/>
        </authorList>
    </citation>
    <scope>NUCLEOTIDE SEQUENCE [MRNA] OF 82-331</scope>
</reference>
<reference key="5">
    <citation type="journal article" date="2004" name="Plant Physiol.">
        <title>The GATA family of transcription factors in Arabidopsis and rice.</title>
        <authorList>
            <person name="Reyes J.C."/>
            <person name="Muro-Pastor M.I."/>
            <person name="Florencio F.J."/>
        </authorList>
    </citation>
    <scope>GENE FAMILY ORGANIZATION</scope>
</reference>
<reference key="6">
    <citation type="journal article" date="2015" name="Plant Cell Physiol.">
        <title>Multiple classes of transcription factors regulate the expression of VASCULAR-RELATED NAC-DOMAIN7, a master switch of xylem vessel differentiation.</title>
        <authorList>
            <person name="Endo H."/>
            <person name="Yamaguchi M."/>
            <person name="Tamura T."/>
            <person name="Nakano Y."/>
            <person name="Nishikubo N."/>
            <person name="Yoneda A."/>
            <person name="Kato K."/>
            <person name="Kubo M."/>
            <person name="Kajita S."/>
            <person name="Katayama Y."/>
            <person name="Ohtani M."/>
            <person name="Demura T."/>
        </authorList>
    </citation>
    <scope>FUNCTION</scope>
    <scope>TISSUE SPECIFICITY</scope>
</reference>
<dbReference type="EMBL" id="AC005405">
    <property type="status" value="NOT_ANNOTATED_CDS"/>
    <property type="molecule type" value="Genomic_DNA"/>
</dbReference>
<dbReference type="EMBL" id="CP002688">
    <property type="protein sequence ID" value="AED93492.1"/>
    <property type="molecule type" value="Genomic_DNA"/>
</dbReference>
<dbReference type="EMBL" id="AB493758">
    <property type="protein sequence ID" value="BAH30596.1"/>
    <property type="molecule type" value="mRNA"/>
</dbReference>
<dbReference type="EMBL" id="DQ875134">
    <property type="status" value="NOT_ANNOTATED_CDS"/>
    <property type="molecule type" value="mRNA"/>
</dbReference>
<dbReference type="RefSeq" id="NP_197955.1">
    <property type="nucleotide sequence ID" value="NM_122484.3"/>
</dbReference>
<dbReference type="SMR" id="P69781"/>
<dbReference type="FunCoup" id="P69781">
    <property type="interactions" value="8"/>
</dbReference>
<dbReference type="STRING" id="3702.P69781"/>
<dbReference type="PaxDb" id="3702-AT5G25830.1"/>
<dbReference type="EnsemblPlants" id="AT5G25830.1">
    <property type="protein sequence ID" value="AT5G25830.1"/>
    <property type="gene ID" value="AT5G25830"/>
</dbReference>
<dbReference type="GeneID" id="832652"/>
<dbReference type="Gramene" id="AT5G25830.1">
    <property type="protein sequence ID" value="AT5G25830.1"/>
    <property type="gene ID" value="AT5G25830"/>
</dbReference>
<dbReference type="KEGG" id="ath:AT5G25830"/>
<dbReference type="Araport" id="AT5G25830"/>
<dbReference type="TAIR" id="AT5G25830">
    <property type="gene designation" value="GATA12"/>
</dbReference>
<dbReference type="eggNOG" id="KOG1601">
    <property type="taxonomic scope" value="Eukaryota"/>
</dbReference>
<dbReference type="HOGENOM" id="CLU_045755_0_0_1"/>
<dbReference type="InParanoid" id="P69781"/>
<dbReference type="OMA" id="EMHQQTP"/>
<dbReference type="PhylomeDB" id="P69781"/>
<dbReference type="PRO" id="PR:P69781"/>
<dbReference type="Proteomes" id="UP000006548">
    <property type="component" value="Chromosome 5"/>
</dbReference>
<dbReference type="ExpressionAtlas" id="P69781">
    <property type="expression patterns" value="baseline and differential"/>
</dbReference>
<dbReference type="GO" id="GO:0005634">
    <property type="term" value="C:nucleus"/>
    <property type="evidence" value="ECO:0007669"/>
    <property type="project" value="UniProtKB-SubCell"/>
</dbReference>
<dbReference type="GO" id="GO:0003700">
    <property type="term" value="F:DNA-binding transcription factor activity"/>
    <property type="evidence" value="ECO:0000250"/>
    <property type="project" value="TAIR"/>
</dbReference>
<dbReference type="GO" id="GO:0000976">
    <property type="term" value="F:transcription cis-regulatory region binding"/>
    <property type="evidence" value="ECO:0000353"/>
    <property type="project" value="TAIR"/>
</dbReference>
<dbReference type="GO" id="GO:0008270">
    <property type="term" value="F:zinc ion binding"/>
    <property type="evidence" value="ECO:0007669"/>
    <property type="project" value="UniProtKB-KW"/>
</dbReference>
<dbReference type="GO" id="GO:0071555">
    <property type="term" value="P:cell wall organization"/>
    <property type="evidence" value="ECO:0007669"/>
    <property type="project" value="UniProtKB-KW"/>
</dbReference>
<dbReference type="GO" id="GO:0007623">
    <property type="term" value="P:circadian rhythm"/>
    <property type="evidence" value="ECO:0000270"/>
    <property type="project" value="TAIR"/>
</dbReference>
<dbReference type="GO" id="GO:0045893">
    <property type="term" value="P:positive regulation of DNA-templated transcription"/>
    <property type="evidence" value="ECO:0007669"/>
    <property type="project" value="InterPro"/>
</dbReference>
<dbReference type="GO" id="GO:0009416">
    <property type="term" value="P:response to light stimulus"/>
    <property type="evidence" value="ECO:0000270"/>
    <property type="project" value="TAIR"/>
</dbReference>
<dbReference type="GO" id="GO:1905177">
    <property type="term" value="P:tracheary element differentiation"/>
    <property type="evidence" value="ECO:0000315"/>
    <property type="project" value="UniProtKB"/>
</dbReference>
<dbReference type="CDD" id="cd00202">
    <property type="entry name" value="ZnF_GATA"/>
    <property type="match status" value="1"/>
</dbReference>
<dbReference type="FunFam" id="3.30.50.10:FF:000018">
    <property type="entry name" value="GATA transcription factor"/>
    <property type="match status" value="1"/>
</dbReference>
<dbReference type="Gene3D" id="3.30.50.10">
    <property type="entry name" value="Erythroid Transcription Factor GATA-1, subunit A"/>
    <property type="match status" value="1"/>
</dbReference>
<dbReference type="InterPro" id="IPR051140">
    <property type="entry name" value="GATA_TF"/>
</dbReference>
<dbReference type="InterPro" id="IPR016679">
    <property type="entry name" value="TF_GATA_pln"/>
</dbReference>
<dbReference type="InterPro" id="IPR000679">
    <property type="entry name" value="Znf_GATA"/>
</dbReference>
<dbReference type="InterPro" id="IPR013088">
    <property type="entry name" value="Znf_NHR/GATA"/>
</dbReference>
<dbReference type="PANTHER" id="PTHR45658">
    <property type="entry name" value="GATA TRANSCRIPTION FACTOR"/>
    <property type="match status" value="1"/>
</dbReference>
<dbReference type="PANTHER" id="PTHR45658:SF18">
    <property type="entry name" value="PROTEIN GAT2"/>
    <property type="match status" value="1"/>
</dbReference>
<dbReference type="Pfam" id="PF00320">
    <property type="entry name" value="GATA"/>
    <property type="match status" value="1"/>
</dbReference>
<dbReference type="PIRSF" id="PIRSF016992">
    <property type="entry name" value="TF_GATA_plant"/>
    <property type="match status" value="1"/>
</dbReference>
<dbReference type="SMART" id="SM00401">
    <property type="entry name" value="ZnF_GATA"/>
    <property type="match status" value="1"/>
</dbReference>
<dbReference type="SUPFAM" id="SSF57716">
    <property type="entry name" value="Glucocorticoid receptor-like (DNA-binding domain)"/>
    <property type="match status" value="1"/>
</dbReference>
<dbReference type="PROSITE" id="PS00344">
    <property type="entry name" value="GATA_ZN_FINGER_1"/>
    <property type="match status" value="1"/>
</dbReference>
<dbReference type="PROSITE" id="PS50114">
    <property type="entry name" value="GATA_ZN_FINGER_2"/>
    <property type="match status" value="1"/>
</dbReference>
<comment type="function">
    <text evidence="1 6">Transcriptional activator that specifically binds 5'-GATA-3' or 5'-GAT-3' motifs within gene promoters. May be involved in the regulation of some light-responsive genes (By similarity). Transcription activator involved in xylem formation. Functions upstream of NAC030/VND7, a master switch of xylem vessel differentiation (PubMed:25265867).</text>
</comment>
<comment type="subcellular location">
    <subcellularLocation>
        <location evidence="4">Nucleus</location>
    </subcellularLocation>
</comment>
<comment type="tissue specificity">
    <text evidence="6">Expressed in the vascular cylinder of roots. Expressed in the differentiation zone of the root stele.</text>
</comment>
<comment type="miscellaneous">
    <text evidence="6">Overexpression of GATA12 induces the formation of ectopic xylem vessel-like elements.</text>
</comment>
<comment type="similarity">
    <text evidence="8">Belongs to the type IV zinc-finger family. Class A subfamily.</text>
</comment>
<comment type="sequence caution" evidence="8">
    <conflict type="miscellaneous discrepancy">
        <sequence resource="EMBL" id="DQ875134"/>
    </conflict>
    <text>Sequencing errors.</text>
</comment>
<gene>
    <name evidence="7" type="primary">GATA12</name>
    <name evidence="9" type="ordered locus">At5g25830</name>
    <name evidence="8" type="ORF">F18A17.80</name>
</gene>
<organism>
    <name type="scientific">Arabidopsis thaliana</name>
    <name type="common">Mouse-ear cress</name>
    <dbReference type="NCBI Taxonomy" id="3702"/>
    <lineage>
        <taxon>Eukaryota</taxon>
        <taxon>Viridiplantae</taxon>
        <taxon>Streptophyta</taxon>
        <taxon>Embryophyta</taxon>
        <taxon>Tracheophyta</taxon>
        <taxon>Spermatophyta</taxon>
        <taxon>Magnoliopsida</taxon>
        <taxon>eudicotyledons</taxon>
        <taxon>Gunneridae</taxon>
        <taxon>Pentapetalae</taxon>
        <taxon>rosids</taxon>
        <taxon>malvids</taxon>
        <taxon>Brassicales</taxon>
        <taxon>Brassicaceae</taxon>
        <taxon>Camelineae</taxon>
        <taxon>Arabidopsis</taxon>
    </lineage>
</organism>
<feature type="chain" id="PRO_0000083442" description="GATA transcription factor 12">
    <location>
        <begin position="1"/>
        <end position="331"/>
    </location>
</feature>
<feature type="zinc finger region" description="GATA-type" evidence="3">
    <location>
        <begin position="215"/>
        <end position="269"/>
    </location>
</feature>
<feature type="region of interest" description="Disordered" evidence="5">
    <location>
        <begin position="30"/>
        <end position="49"/>
    </location>
</feature>
<feature type="region of interest" description="Disordered" evidence="5">
    <location>
        <begin position="105"/>
        <end position="138"/>
    </location>
</feature>
<feature type="region of interest" description="Disordered" evidence="5">
    <location>
        <begin position="174"/>
        <end position="218"/>
    </location>
</feature>
<feature type="short sequence motif" description="Nuclear localization signal" evidence="2">
    <location>
        <begin position="139"/>
        <end position="146"/>
    </location>
</feature>
<feature type="compositionally biased region" description="Low complexity" evidence="5">
    <location>
        <begin position="34"/>
        <end position="47"/>
    </location>
</feature>
<feature type="compositionally biased region" description="Polar residues" evidence="5">
    <location>
        <begin position="116"/>
        <end position="134"/>
    </location>
</feature>
<keyword id="KW-0010">Activator</keyword>
<keyword id="KW-0961">Cell wall biogenesis/degradation</keyword>
<keyword id="KW-0217">Developmental protein</keyword>
<keyword id="KW-0238">DNA-binding</keyword>
<keyword id="KW-0479">Metal-binding</keyword>
<keyword id="KW-0539">Nucleus</keyword>
<keyword id="KW-1185">Reference proteome</keyword>
<keyword id="KW-0804">Transcription</keyword>
<keyword id="KW-0805">Transcription regulation</keyword>
<keyword id="KW-0862">Zinc</keyword>
<keyword id="KW-0863">Zinc-finger</keyword>